<name>RNPH_PARXL</name>
<organism>
    <name type="scientific">Paraburkholderia xenovorans (strain LB400)</name>
    <dbReference type="NCBI Taxonomy" id="266265"/>
    <lineage>
        <taxon>Bacteria</taxon>
        <taxon>Pseudomonadati</taxon>
        <taxon>Pseudomonadota</taxon>
        <taxon>Betaproteobacteria</taxon>
        <taxon>Burkholderiales</taxon>
        <taxon>Burkholderiaceae</taxon>
        <taxon>Paraburkholderia</taxon>
    </lineage>
</organism>
<gene>
    <name evidence="1" type="primary">rph</name>
    <name type="ordered locus">Bxeno_A3504</name>
    <name type="ORF">Bxe_A0903</name>
</gene>
<protein>
    <recommendedName>
        <fullName evidence="1">Ribonuclease PH</fullName>
        <shortName evidence="1">RNase PH</shortName>
        <ecNumber evidence="1">2.7.7.56</ecNumber>
    </recommendedName>
    <alternativeName>
        <fullName evidence="1">tRNA nucleotidyltransferase</fullName>
    </alternativeName>
</protein>
<feature type="chain" id="PRO_1000024793" description="Ribonuclease PH">
    <location>
        <begin position="1"/>
        <end position="246"/>
    </location>
</feature>
<feature type="binding site" evidence="1">
    <location>
        <position position="91"/>
    </location>
    <ligand>
        <name>phosphate</name>
        <dbReference type="ChEBI" id="CHEBI:43474"/>
        <note>substrate</note>
    </ligand>
</feature>
<feature type="binding site" evidence="1">
    <location>
        <begin position="129"/>
        <end position="131"/>
    </location>
    <ligand>
        <name>phosphate</name>
        <dbReference type="ChEBI" id="CHEBI:43474"/>
        <note>substrate</note>
    </ligand>
</feature>
<evidence type="ECO:0000255" key="1">
    <source>
        <dbReference type="HAMAP-Rule" id="MF_00564"/>
    </source>
</evidence>
<proteinExistence type="inferred from homology"/>
<sequence length="246" mass="26597">MTNNTQRPSGRQADQLRDVRITRHYTKHAEGSVLVEFGDTKVICTASIAESVPSFLRDRGQGWLTAEYGMLPRATHTRSDREAARGKQTGRTQEIQRLIGRALRSVFDLEKLGARTLHIDCDVIQADGGTRTASITGAFVAAHDAVARLLATGRIESSPITDYVAAISVGVYDGLPVLDLDYDEDSQCDTDMNVVMTGAGGFVEIQGTAEGVPFSRDEMNALLDLASDGINTLIAKQKAALEQKGE</sequence>
<comment type="function">
    <text evidence="1">Phosphorolytic 3'-5' exoribonuclease that plays an important role in tRNA 3'-end maturation. Removes nucleotide residues following the 3'-CCA terminus of tRNAs; can also add nucleotides to the ends of RNA molecules by using nucleoside diphosphates as substrates, but this may not be physiologically important. Probably plays a role in initiation of 16S rRNA degradation (leading to ribosome degradation) during starvation.</text>
</comment>
<comment type="catalytic activity">
    <reaction evidence="1">
        <text>tRNA(n+1) + phosphate = tRNA(n) + a ribonucleoside 5'-diphosphate</text>
        <dbReference type="Rhea" id="RHEA:10628"/>
        <dbReference type="Rhea" id="RHEA-COMP:17343"/>
        <dbReference type="Rhea" id="RHEA-COMP:17344"/>
        <dbReference type="ChEBI" id="CHEBI:43474"/>
        <dbReference type="ChEBI" id="CHEBI:57930"/>
        <dbReference type="ChEBI" id="CHEBI:173114"/>
        <dbReference type="EC" id="2.7.7.56"/>
    </reaction>
</comment>
<comment type="subunit">
    <text evidence="1">Homohexameric ring arranged as a trimer of dimers.</text>
</comment>
<comment type="similarity">
    <text evidence="1">Belongs to the RNase PH family.</text>
</comment>
<keyword id="KW-0548">Nucleotidyltransferase</keyword>
<keyword id="KW-1185">Reference proteome</keyword>
<keyword id="KW-0694">RNA-binding</keyword>
<keyword id="KW-0698">rRNA processing</keyword>
<keyword id="KW-0808">Transferase</keyword>
<keyword id="KW-0819">tRNA processing</keyword>
<keyword id="KW-0820">tRNA-binding</keyword>
<dbReference type="EC" id="2.7.7.56" evidence="1"/>
<dbReference type="EMBL" id="CP000270">
    <property type="protein sequence ID" value="ABE32042.1"/>
    <property type="molecule type" value="Genomic_DNA"/>
</dbReference>
<dbReference type="RefSeq" id="WP_011489549.1">
    <property type="nucleotide sequence ID" value="NC_007951.1"/>
</dbReference>
<dbReference type="SMR" id="Q13V47"/>
<dbReference type="STRING" id="266265.Bxe_A0903"/>
<dbReference type="KEGG" id="bxb:DR64_3065"/>
<dbReference type="KEGG" id="bxe:Bxe_A0903"/>
<dbReference type="PATRIC" id="fig|266265.5.peg.3680"/>
<dbReference type="eggNOG" id="COG0689">
    <property type="taxonomic scope" value="Bacteria"/>
</dbReference>
<dbReference type="OrthoDB" id="9802265at2"/>
<dbReference type="Proteomes" id="UP000001817">
    <property type="component" value="Chromosome 1"/>
</dbReference>
<dbReference type="GO" id="GO:0000175">
    <property type="term" value="F:3'-5'-RNA exonuclease activity"/>
    <property type="evidence" value="ECO:0007669"/>
    <property type="project" value="UniProtKB-UniRule"/>
</dbReference>
<dbReference type="GO" id="GO:0000049">
    <property type="term" value="F:tRNA binding"/>
    <property type="evidence" value="ECO:0007669"/>
    <property type="project" value="UniProtKB-UniRule"/>
</dbReference>
<dbReference type="GO" id="GO:0009022">
    <property type="term" value="F:tRNA nucleotidyltransferase activity"/>
    <property type="evidence" value="ECO:0007669"/>
    <property type="project" value="UniProtKB-UniRule"/>
</dbReference>
<dbReference type="GO" id="GO:0016075">
    <property type="term" value="P:rRNA catabolic process"/>
    <property type="evidence" value="ECO:0007669"/>
    <property type="project" value="UniProtKB-UniRule"/>
</dbReference>
<dbReference type="GO" id="GO:0006364">
    <property type="term" value="P:rRNA processing"/>
    <property type="evidence" value="ECO:0007669"/>
    <property type="project" value="UniProtKB-KW"/>
</dbReference>
<dbReference type="GO" id="GO:0008033">
    <property type="term" value="P:tRNA processing"/>
    <property type="evidence" value="ECO:0007669"/>
    <property type="project" value="UniProtKB-UniRule"/>
</dbReference>
<dbReference type="CDD" id="cd11362">
    <property type="entry name" value="RNase_PH_bact"/>
    <property type="match status" value="1"/>
</dbReference>
<dbReference type="FunFam" id="3.30.230.70:FF:000003">
    <property type="entry name" value="Ribonuclease PH"/>
    <property type="match status" value="1"/>
</dbReference>
<dbReference type="Gene3D" id="3.30.230.70">
    <property type="entry name" value="GHMP Kinase, N-terminal domain"/>
    <property type="match status" value="1"/>
</dbReference>
<dbReference type="HAMAP" id="MF_00564">
    <property type="entry name" value="RNase_PH"/>
    <property type="match status" value="1"/>
</dbReference>
<dbReference type="InterPro" id="IPR001247">
    <property type="entry name" value="ExoRNase_PH_dom1"/>
</dbReference>
<dbReference type="InterPro" id="IPR015847">
    <property type="entry name" value="ExoRNase_PH_dom2"/>
</dbReference>
<dbReference type="InterPro" id="IPR036345">
    <property type="entry name" value="ExoRNase_PH_dom2_sf"/>
</dbReference>
<dbReference type="InterPro" id="IPR027408">
    <property type="entry name" value="PNPase/RNase_PH_dom_sf"/>
</dbReference>
<dbReference type="InterPro" id="IPR020568">
    <property type="entry name" value="Ribosomal_Su5_D2-typ_SF"/>
</dbReference>
<dbReference type="InterPro" id="IPR050080">
    <property type="entry name" value="RNase_PH"/>
</dbReference>
<dbReference type="InterPro" id="IPR002381">
    <property type="entry name" value="RNase_PH_bac-type"/>
</dbReference>
<dbReference type="InterPro" id="IPR018336">
    <property type="entry name" value="RNase_PH_CS"/>
</dbReference>
<dbReference type="NCBIfam" id="TIGR01966">
    <property type="entry name" value="RNasePH"/>
    <property type="match status" value="1"/>
</dbReference>
<dbReference type="PANTHER" id="PTHR11953">
    <property type="entry name" value="EXOSOME COMPLEX COMPONENT"/>
    <property type="match status" value="1"/>
</dbReference>
<dbReference type="PANTHER" id="PTHR11953:SF0">
    <property type="entry name" value="EXOSOME COMPLEX COMPONENT RRP41"/>
    <property type="match status" value="1"/>
</dbReference>
<dbReference type="Pfam" id="PF01138">
    <property type="entry name" value="RNase_PH"/>
    <property type="match status" value="1"/>
</dbReference>
<dbReference type="Pfam" id="PF03725">
    <property type="entry name" value="RNase_PH_C"/>
    <property type="match status" value="1"/>
</dbReference>
<dbReference type="SUPFAM" id="SSF55666">
    <property type="entry name" value="Ribonuclease PH domain 2-like"/>
    <property type="match status" value="1"/>
</dbReference>
<dbReference type="SUPFAM" id="SSF54211">
    <property type="entry name" value="Ribosomal protein S5 domain 2-like"/>
    <property type="match status" value="1"/>
</dbReference>
<dbReference type="PROSITE" id="PS01277">
    <property type="entry name" value="RIBONUCLEASE_PH"/>
    <property type="match status" value="1"/>
</dbReference>
<accession>Q13V47</accession>
<reference key="1">
    <citation type="journal article" date="2006" name="Proc. Natl. Acad. Sci. U.S.A.">
        <title>Burkholderia xenovorans LB400 harbors a multi-replicon, 9.73-Mbp genome shaped for versatility.</title>
        <authorList>
            <person name="Chain P.S.G."/>
            <person name="Denef V.J."/>
            <person name="Konstantinidis K.T."/>
            <person name="Vergez L.M."/>
            <person name="Agullo L."/>
            <person name="Reyes V.L."/>
            <person name="Hauser L."/>
            <person name="Cordova M."/>
            <person name="Gomez L."/>
            <person name="Gonzalez M."/>
            <person name="Land M."/>
            <person name="Lao V."/>
            <person name="Larimer F."/>
            <person name="LiPuma J.J."/>
            <person name="Mahenthiralingam E."/>
            <person name="Malfatti S.A."/>
            <person name="Marx C.J."/>
            <person name="Parnell J.J."/>
            <person name="Ramette A."/>
            <person name="Richardson P."/>
            <person name="Seeger M."/>
            <person name="Smith D."/>
            <person name="Spilker T."/>
            <person name="Sul W.J."/>
            <person name="Tsoi T.V."/>
            <person name="Ulrich L.E."/>
            <person name="Zhulin I.B."/>
            <person name="Tiedje J.M."/>
        </authorList>
    </citation>
    <scope>NUCLEOTIDE SEQUENCE [LARGE SCALE GENOMIC DNA]</scope>
    <source>
        <strain>LB400</strain>
    </source>
</reference>